<keyword id="KW-0027">Amidation</keyword>
<keyword id="KW-0165">Cleavage on pair of basic residues</keyword>
<keyword id="KW-0903">Direct protein sequencing</keyword>
<keyword id="KW-0372">Hormone</keyword>
<keyword id="KW-0964">Secreted</keyword>
<keyword id="KW-0732">Signal</keyword>
<keyword id="KW-0765">Sulfation</keyword>
<reference key="1">
    <citation type="journal article" date="1997" name="Endocrinology">
        <title>Characterization of the cholecystokinin and gastrin genes from the bullfrog, Rana catesbeiana: evolutionary conservation of primary and secondary sites of gene expression.</title>
        <authorList>
            <person name="Rourke I.J."/>
            <person name="Rehfeld J.F."/>
            <person name="Moeller M."/>
            <person name="Johnson A.H."/>
        </authorList>
    </citation>
    <scope>NUCLEOTIDE SEQUENCE [GENOMIC DNA / MRNA]</scope>
</reference>
<reference key="2">
    <citation type="journal article" date="1994" name="Eur. J. Biochem.">
        <title>Identification of cholecystokinin from frog and turtle. Divergence of cholecystokinin and gastrin occurred before the evolution of amphibia.</title>
        <authorList>
            <person name="Johnsen A.H."/>
        </authorList>
    </citation>
    <scope>PROTEIN SEQUENCE OF 50-118</scope>
    <scope>SULFATION AT TYR-112</scope>
    <scope>AMIDATION AT PHE-118</scope>
    <source>
        <tissue>Small intestine</tissue>
    </source>
</reference>
<evidence type="ECO:0000250" key="1"/>
<evidence type="ECO:0000255" key="2"/>
<evidence type="ECO:0000269" key="3">
    <source>
    </source>
</evidence>
<evidence type="ECO:0000305" key="4"/>
<feature type="signal peptide" evidence="2">
    <location>
        <begin position="1"/>
        <end position="20"/>
    </location>
</feature>
<feature type="chain" id="PRO_0000010588" description="Cholecystokinin">
    <location>
        <begin position="21"/>
        <end position="130"/>
    </location>
</feature>
<feature type="propeptide" id="PRO_0000010589">
    <location>
        <begin position="21"/>
        <end position="60"/>
    </location>
</feature>
<feature type="peptide" id="PRO_0000010590" description="Cholecystokinin-58">
    <location>
        <begin position="61"/>
        <end position="118"/>
    </location>
</feature>
<feature type="peptide" id="PRO_0000010591" description="Cholecystokinin-33">
    <location>
        <begin position="86"/>
        <end position="118"/>
    </location>
</feature>
<feature type="peptide" id="PRO_0000010592" description="Cholecystokinin-8">
    <location>
        <begin position="111"/>
        <end position="118"/>
    </location>
</feature>
<feature type="peptide" id="PRO_0000010593" description="Cholecystokinin-7">
    <location>
        <begin position="112"/>
        <end position="118"/>
    </location>
</feature>
<feature type="propeptide" id="PRO_0000010594">
    <location>
        <begin position="122"/>
        <end position="130"/>
    </location>
</feature>
<feature type="modified residue" description="Sulfotyrosine" evidence="3">
    <location>
        <position position="112"/>
    </location>
</feature>
<feature type="modified residue" description="Phenylalanine amide" evidence="3">
    <location>
        <position position="118"/>
    </location>
</feature>
<feature type="modified residue" description="Sulfotyrosine" evidence="1">
    <location>
        <position position="126"/>
    </location>
</feature>
<feature type="modified residue" description="Sulfotyrosine" evidence="1">
    <location>
        <position position="128"/>
    </location>
</feature>
<protein>
    <recommendedName>
        <fullName>Cholecystokinin</fullName>
        <shortName>CCK</shortName>
    </recommendedName>
    <component>
        <recommendedName>
            <fullName>Cholecystokinin-58</fullName>
            <shortName>CCK58</shortName>
        </recommendedName>
    </component>
    <component>
        <recommendedName>
            <fullName>Cholecystokinin-33</fullName>
            <shortName>CCK33</shortName>
        </recommendedName>
    </component>
    <component>
        <recommendedName>
            <fullName>Cholecystokinin-8</fullName>
            <shortName>CCK8</shortName>
        </recommendedName>
    </component>
    <component>
        <recommendedName>
            <fullName>Cholecystokinin-7</fullName>
            <shortName>CCK7</shortName>
        </recommendedName>
    </component>
</protein>
<dbReference type="EMBL" id="Y08395">
    <property type="protein sequence ID" value="CAA69674.1"/>
    <property type="molecule type" value="Genomic_DNA"/>
</dbReference>
<dbReference type="EMBL" id="Y08396">
    <property type="protein sequence ID" value="CAA69674.1"/>
    <property type="status" value="JOINED"/>
    <property type="molecule type" value="Genomic_DNA"/>
</dbReference>
<dbReference type="EMBL" id="Y08393">
    <property type="protein sequence ID" value="CAA69673.1"/>
    <property type="molecule type" value="mRNA"/>
</dbReference>
<dbReference type="PIR" id="S48150">
    <property type="entry name" value="S48150"/>
</dbReference>
<dbReference type="GO" id="GO:0030424">
    <property type="term" value="C:axon"/>
    <property type="evidence" value="ECO:0007669"/>
    <property type="project" value="TreeGrafter"/>
</dbReference>
<dbReference type="GO" id="GO:0005615">
    <property type="term" value="C:extracellular space"/>
    <property type="evidence" value="ECO:0007669"/>
    <property type="project" value="TreeGrafter"/>
</dbReference>
<dbReference type="GO" id="GO:0005184">
    <property type="term" value="F:neuropeptide hormone activity"/>
    <property type="evidence" value="ECO:0007669"/>
    <property type="project" value="InterPro"/>
</dbReference>
<dbReference type="GO" id="GO:0007586">
    <property type="term" value="P:digestion"/>
    <property type="evidence" value="ECO:0007669"/>
    <property type="project" value="InterPro"/>
</dbReference>
<dbReference type="InterPro" id="IPR015499">
    <property type="entry name" value="CCK-like"/>
</dbReference>
<dbReference type="InterPro" id="IPR001651">
    <property type="entry name" value="Gastrin/CCK"/>
</dbReference>
<dbReference type="InterPro" id="IPR013152">
    <property type="entry name" value="Gastrin/cholecystokinin_CS"/>
</dbReference>
<dbReference type="PANTHER" id="PTHR10786">
    <property type="entry name" value="CHOLECYSTOKININ"/>
    <property type="match status" value="1"/>
</dbReference>
<dbReference type="PANTHER" id="PTHR10786:SF0">
    <property type="entry name" value="CHOLECYSTOKININ"/>
    <property type="match status" value="1"/>
</dbReference>
<dbReference type="Pfam" id="PF00918">
    <property type="entry name" value="Gastrin"/>
    <property type="match status" value="1"/>
</dbReference>
<dbReference type="SMART" id="SM00029">
    <property type="entry name" value="GASTRIN"/>
    <property type="match status" value="1"/>
</dbReference>
<dbReference type="PROSITE" id="PS00259">
    <property type="entry name" value="GASTRIN"/>
    <property type="match status" value="1"/>
</dbReference>
<comment type="function">
    <text>This peptide hormone induces gall bladder contraction and the release of pancreatic enzymes in the gut. Its function in the brain is not clear.</text>
</comment>
<comment type="subcellular location">
    <subcellularLocation>
        <location>Secreted</location>
    </subcellularLocation>
</comment>
<comment type="tissue specificity">
    <text>Expressed in brain, lung, testis and throughout the length of the small intestine. In the brain, expressed predominantly in the optic tectum and brain stem.</text>
</comment>
<comment type="PTM">
    <text>The precursor is cleaved by proteases to produce a number of active cholecystokinins.</text>
</comment>
<comment type="miscellaneous">
    <text>Frog brain contains CCK-octapeptide (CCK8) and CCK7; whereas the gut contains intact CCK33 and CCK58.</text>
</comment>
<comment type="similarity">
    <text evidence="4">Belongs to the gastrin/cholecystokinin family.</text>
</comment>
<organism>
    <name type="scientific">Aquarana catesbeiana</name>
    <name type="common">American bullfrog</name>
    <name type="synonym">Rana catesbeiana</name>
    <dbReference type="NCBI Taxonomy" id="8400"/>
    <lineage>
        <taxon>Eukaryota</taxon>
        <taxon>Metazoa</taxon>
        <taxon>Chordata</taxon>
        <taxon>Craniata</taxon>
        <taxon>Vertebrata</taxon>
        <taxon>Euteleostomi</taxon>
        <taxon>Amphibia</taxon>
        <taxon>Batrachia</taxon>
        <taxon>Anura</taxon>
        <taxon>Neobatrachia</taxon>
        <taxon>Ranoidea</taxon>
        <taxon>Ranidae</taxon>
        <taxon>Aquarana</taxon>
    </lineage>
</organism>
<name>CCKN_AQUCT</name>
<sequence length="130" mass="14449">MYIGICICVLLAALSASSTGQQTVGSMNEDPGAREIEQQNILQHPRHIRASSSAQLKPFQRIDGTSDQKAVIGAMLAKYLQTRKAGSSTGRYAVLPNRPVIDPTHRINDRDYMGWMDFGRRSAEEYEYSS</sequence>
<gene>
    <name type="primary">CCK</name>
</gene>
<accession>P80344</accession>
<proteinExistence type="evidence at protein level"/>